<gene>
    <name evidence="1" type="primary">kefF</name>
    <name type="ordered locus">ECDH10B_0047</name>
</gene>
<dbReference type="EC" id="1.6.5.2" evidence="1"/>
<dbReference type="EMBL" id="CP000948">
    <property type="protein sequence ID" value="ACB01251.1"/>
    <property type="molecule type" value="Genomic_DNA"/>
</dbReference>
<dbReference type="RefSeq" id="WP_000600725.1">
    <property type="nucleotide sequence ID" value="NC_010473.1"/>
</dbReference>
<dbReference type="SMR" id="B1XC47"/>
<dbReference type="GeneID" id="89519427"/>
<dbReference type="KEGG" id="ecd:ECDH10B_0047"/>
<dbReference type="HOGENOM" id="CLU_058643_0_2_6"/>
<dbReference type="GO" id="GO:0005886">
    <property type="term" value="C:plasma membrane"/>
    <property type="evidence" value="ECO:0007669"/>
    <property type="project" value="UniProtKB-SubCell"/>
</dbReference>
<dbReference type="GO" id="GO:0009055">
    <property type="term" value="F:electron transfer activity"/>
    <property type="evidence" value="ECO:0007669"/>
    <property type="project" value="TreeGrafter"/>
</dbReference>
<dbReference type="GO" id="GO:0010181">
    <property type="term" value="F:FMN binding"/>
    <property type="evidence" value="ECO:0007669"/>
    <property type="project" value="UniProtKB-UniRule"/>
</dbReference>
<dbReference type="GO" id="GO:0050136">
    <property type="term" value="F:NADH:ubiquinone reductase (non-electrogenic) activity"/>
    <property type="evidence" value="ECO:0007669"/>
    <property type="project" value="RHEA"/>
</dbReference>
<dbReference type="GO" id="GO:0008753">
    <property type="term" value="F:NADPH dehydrogenase (quinone) activity"/>
    <property type="evidence" value="ECO:0007669"/>
    <property type="project" value="RHEA"/>
</dbReference>
<dbReference type="GO" id="GO:1901381">
    <property type="term" value="P:positive regulation of potassium ion transmembrane transport"/>
    <property type="evidence" value="ECO:0007669"/>
    <property type="project" value="UniProtKB-UniRule"/>
</dbReference>
<dbReference type="GO" id="GO:0006813">
    <property type="term" value="P:potassium ion transport"/>
    <property type="evidence" value="ECO:0007669"/>
    <property type="project" value="InterPro"/>
</dbReference>
<dbReference type="FunFam" id="3.40.50.360:FF:000008">
    <property type="entry name" value="Glutathione-regulated potassium-efflux system ancillary protein KefF"/>
    <property type="match status" value="1"/>
</dbReference>
<dbReference type="Gene3D" id="3.40.50.360">
    <property type="match status" value="1"/>
</dbReference>
<dbReference type="HAMAP" id="MF_01414">
    <property type="entry name" value="K_H_efflux_KefF"/>
    <property type="match status" value="1"/>
</dbReference>
<dbReference type="InterPro" id="IPR003680">
    <property type="entry name" value="Flavodoxin_fold"/>
</dbReference>
<dbReference type="InterPro" id="IPR029039">
    <property type="entry name" value="Flavoprotein-like_sf"/>
</dbReference>
<dbReference type="InterPro" id="IPR023948">
    <property type="entry name" value="K_H_efflux_KefF"/>
</dbReference>
<dbReference type="InterPro" id="IPR046980">
    <property type="entry name" value="KefG/KefF"/>
</dbReference>
<dbReference type="NCBIfam" id="NF002044">
    <property type="entry name" value="PRK00871.1"/>
    <property type="match status" value="1"/>
</dbReference>
<dbReference type="PANTHER" id="PTHR47307:SF2">
    <property type="entry name" value="GLUTATHIONE-REGULATED POTASSIUM-EFFLUX SYSTEM ANCILLARY PROTEIN KEFF"/>
    <property type="match status" value="1"/>
</dbReference>
<dbReference type="PANTHER" id="PTHR47307">
    <property type="entry name" value="GLUTATHIONE-REGULATED POTASSIUM-EFFLUX SYSTEM ANCILLARY PROTEIN KEFG"/>
    <property type="match status" value="1"/>
</dbReference>
<dbReference type="Pfam" id="PF02525">
    <property type="entry name" value="Flavodoxin_2"/>
    <property type="match status" value="1"/>
</dbReference>
<dbReference type="SUPFAM" id="SSF52218">
    <property type="entry name" value="Flavoproteins"/>
    <property type="match status" value="1"/>
</dbReference>
<feature type="chain" id="PRO_1000145557" description="Glutathione-regulated potassium-efflux system ancillary protein KefF">
    <location>
        <begin position="1"/>
        <end position="176"/>
    </location>
</feature>
<feature type="binding site" evidence="1">
    <location>
        <position position="8"/>
    </location>
    <ligand>
        <name>FMN</name>
        <dbReference type="ChEBI" id="CHEBI:58210"/>
    </ligand>
</feature>
<feature type="binding site" evidence="1">
    <location>
        <begin position="14"/>
        <end position="17"/>
    </location>
    <ligand>
        <name>FMN</name>
        <dbReference type="ChEBI" id="CHEBI:58210"/>
    </ligand>
</feature>
<feature type="binding site" evidence="1">
    <location>
        <begin position="65"/>
        <end position="68"/>
    </location>
    <ligand>
        <name>FMN</name>
        <dbReference type="ChEBI" id="CHEBI:58210"/>
    </ligand>
</feature>
<feature type="binding site" evidence="1">
    <location>
        <begin position="105"/>
        <end position="108"/>
    </location>
    <ligand>
        <name>FMN</name>
        <dbReference type="ChEBI" id="CHEBI:58210"/>
    </ligand>
</feature>
<keyword id="KW-0997">Cell inner membrane</keyword>
<keyword id="KW-1003">Cell membrane</keyword>
<keyword id="KW-0285">Flavoprotein</keyword>
<keyword id="KW-0288">FMN</keyword>
<keyword id="KW-0472">Membrane</keyword>
<keyword id="KW-0520">NAD</keyword>
<keyword id="KW-0560">Oxidoreductase</keyword>
<sequence length="176" mass="20170">MILIIYAHPYPHHSHANKRMLEQARTLEGVEIRSLYQLYPDFNIDIAAEQEALSRADLIVWQHPMQWYSIPPLLKLWIDKVFSHGWAYGHGGTALHGKHLLWAVTTGGGESHFEIGAHPGFDVLSQPLQATAIYCGLNWLPPFAMHCTFICDDETLEGQARHYKQRLLEWQEAHHG</sequence>
<organism>
    <name type="scientific">Escherichia coli (strain K12 / DH10B)</name>
    <dbReference type="NCBI Taxonomy" id="316385"/>
    <lineage>
        <taxon>Bacteria</taxon>
        <taxon>Pseudomonadati</taxon>
        <taxon>Pseudomonadota</taxon>
        <taxon>Gammaproteobacteria</taxon>
        <taxon>Enterobacterales</taxon>
        <taxon>Enterobacteriaceae</taxon>
        <taxon>Escherichia</taxon>
    </lineage>
</organism>
<evidence type="ECO:0000255" key="1">
    <source>
        <dbReference type="HAMAP-Rule" id="MF_01414"/>
    </source>
</evidence>
<accession>B1XC47</accession>
<protein>
    <recommendedName>
        <fullName evidence="1">Glutathione-regulated potassium-efflux system ancillary protein KefF</fullName>
    </recommendedName>
    <alternativeName>
        <fullName evidence="1">Quinone oxidoreductase KefF</fullName>
        <ecNumber evidence="1">1.6.5.2</ecNumber>
    </alternativeName>
</protein>
<proteinExistence type="inferred from homology"/>
<reference key="1">
    <citation type="journal article" date="2008" name="J. Bacteriol.">
        <title>The complete genome sequence of Escherichia coli DH10B: insights into the biology of a laboratory workhorse.</title>
        <authorList>
            <person name="Durfee T."/>
            <person name="Nelson R."/>
            <person name="Baldwin S."/>
            <person name="Plunkett G. III"/>
            <person name="Burland V."/>
            <person name="Mau B."/>
            <person name="Petrosino J.F."/>
            <person name="Qin X."/>
            <person name="Muzny D.M."/>
            <person name="Ayele M."/>
            <person name="Gibbs R.A."/>
            <person name="Csorgo B."/>
            <person name="Posfai G."/>
            <person name="Weinstock G.M."/>
            <person name="Blattner F.R."/>
        </authorList>
    </citation>
    <scope>NUCLEOTIDE SEQUENCE [LARGE SCALE GENOMIC DNA]</scope>
    <source>
        <strain>K12 / DH10B</strain>
    </source>
</reference>
<name>KEFF_ECODH</name>
<comment type="function">
    <text evidence="1">Regulatory subunit of a potassium efflux system that confers protection against electrophiles. Required for full activity of KefC. Shows redox enzymatic activity, but this enzymatic activity is not required for activation of KefC.</text>
</comment>
<comment type="catalytic activity">
    <reaction evidence="1">
        <text>a quinone + NADH + H(+) = a quinol + NAD(+)</text>
        <dbReference type="Rhea" id="RHEA:46160"/>
        <dbReference type="ChEBI" id="CHEBI:15378"/>
        <dbReference type="ChEBI" id="CHEBI:24646"/>
        <dbReference type="ChEBI" id="CHEBI:57540"/>
        <dbReference type="ChEBI" id="CHEBI:57945"/>
        <dbReference type="ChEBI" id="CHEBI:132124"/>
        <dbReference type="EC" id="1.6.5.2"/>
    </reaction>
</comment>
<comment type="catalytic activity">
    <reaction evidence="1">
        <text>a quinone + NADPH + H(+) = a quinol + NADP(+)</text>
        <dbReference type="Rhea" id="RHEA:46164"/>
        <dbReference type="ChEBI" id="CHEBI:15378"/>
        <dbReference type="ChEBI" id="CHEBI:24646"/>
        <dbReference type="ChEBI" id="CHEBI:57783"/>
        <dbReference type="ChEBI" id="CHEBI:58349"/>
        <dbReference type="ChEBI" id="CHEBI:132124"/>
        <dbReference type="EC" id="1.6.5.2"/>
    </reaction>
</comment>
<comment type="cofactor">
    <cofactor evidence="1">
        <name>FMN</name>
        <dbReference type="ChEBI" id="CHEBI:58210"/>
    </cofactor>
</comment>
<comment type="subunit">
    <text evidence="1">Homodimer. Interacts with KefC.</text>
</comment>
<comment type="subcellular location">
    <subcellularLocation>
        <location evidence="1">Cell inner membrane</location>
        <topology evidence="1">Peripheral membrane protein</topology>
        <orientation evidence="1">Cytoplasmic side</orientation>
    </subcellularLocation>
</comment>
<comment type="similarity">
    <text evidence="1">Belongs to the NAD(P)H dehydrogenase (quinone) family. KefF subfamily.</text>
</comment>